<dbReference type="GO" id="GO:0005576">
    <property type="term" value="C:extracellular region"/>
    <property type="evidence" value="ECO:0007669"/>
    <property type="project" value="UniProtKB-SubCell"/>
</dbReference>
<dbReference type="GO" id="GO:0005184">
    <property type="term" value="F:neuropeptide hormone activity"/>
    <property type="evidence" value="ECO:0007669"/>
    <property type="project" value="InterPro"/>
</dbReference>
<dbReference type="GO" id="GO:0007218">
    <property type="term" value="P:neuropeptide signaling pathway"/>
    <property type="evidence" value="ECO:0007669"/>
    <property type="project" value="UniProtKB-KW"/>
</dbReference>
<dbReference type="InterPro" id="IPR001484">
    <property type="entry name" value="Pyrokinin_CS"/>
</dbReference>
<dbReference type="PROSITE" id="PS00539">
    <property type="entry name" value="PYROKININ"/>
    <property type="match status" value="1"/>
</dbReference>
<protein>
    <recommendedName>
        <fullName evidence="1">Pyrokinin-5</fullName>
    </recommendedName>
    <alternativeName>
        <fullName evidence="1">FXPRL-amide</fullName>
    </alternativeName>
    <alternativeName>
        <fullName evidence="4">PerSc-Capa-PK</fullName>
    </alternativeName>
</protein>
<evidence type="ECO:0000250" key="1">
    <source>
        <dbReference type="UniProtKB" id="P82617"/>
    </source>
</evidence>
<evidence type="ECO:0000255" key="2"/>
<evidence type="ECO:0000269" key="3">
    <source>
    </source>
</evidence>
<evidence type="ECO:0000303" key="4">
    <source>
    </source>
</evidence>
<evidence type="ECO:0000305" key="5"/>
<accession>P85726</accession>
<organism>
    <name type="scientific">Perisphaeria cf. scabrella (strain SR-2005)</name>
    <name type="common">Cockroach</name>
    <dbReference type="NCBI Taxonomy" id="348759"/>
    <lineage>
        <taxon>Eukaryota</taxon>
        <taxon>Metazoa</taxon>
        <taxon>Ecdysozoa</taxon>
        <taxon>Arthropoda</taxon>
        <taxon>Hexapoda</taxon>
        <taxon>Insecta</taxon>
        <taxon>Pterygota</taxon>
        <taxon>Neoptera</taxon>
        <taxon>Polyneoptera</taxon>
        <taxon>Dictyoptera</taxon>
        <taxon>Blattodea</taxon>
        <taxon>Blaberoidea</taxon>
        <taxon>Blaberidae</taxon>
        <taxon>Perisphaerinae</taxon>
        <taxon>Perisphaeria</taxon>
    </lineage>
</organism>
<reference evidence="5" key="1">
    <citation type="journal article" date="2009" name="BMC Evol. Biol.">
        <title>A proteomic approach for studying insect phylogeny: CAPA peptides of ancient insect taxa (Dictyoptera, Blattoptera) as a test case.</title>
        <authorList>
            <person name="Roth S."/>
            <person name="Fromm B."/>
            <person name="Gaede G."/>
            <person name="Predel R."/>
        </authorList>
    </citation>
    <scope>PROTEIN SEQUENCE</scope>
    <scope>AMIDATION AT LEU-17</scope>
    <source>
        <tissue evidence="3">Abdominal perisympathetic organs</tissue>
    </source>
</reference>
<comment type="function">
    <text evidence="1">Myoactive.</text>
</comment>
<comment type="subcellular location">
    <subcellularLocation>
        <location evidence="5">Secreted</location>
    </subcellularLocation>
</comment>
<comment type="similarity">
    <text evidence="2">Belongs to the pyrokinin family.</text>
</comment>
<feature type="peptide" id="PRO_0000378715" description="Pyrokinin-5" evidence="3">
    <location>
        <begin position="1"/>
        <end position="17"/>
    </location>
</feature>
<feature type="modified residue" description="Leucine amide" evidence="3">
    <location>
        <position position="17"/>
    </location>
</feature>
<keyword id="KW-0027">Amidation</keyword>
<keyword id="KW-0903">Direct protein sequencing</keyword>
<keyword id="KW-0527">Neuropeptide</keyword>
<keyword id="KW-0964">Secreted</keyword>
<proteinExistence type="evidence at protein level"/>
<name>PPK5_PERSS</name>
<sequence>SGETSGEGNGMWFGPRL</sequence>